<protein>
    <recommendedName>
        <fullName>Trimethylamine-N-oxide reductase</fullName>
        <shortName>TMAO reductase</shortName>
        <shortName>Trimethylamine oxidase</shortName>
        <ecNumber>1.7.2.3</ecNumber>
    </recommendedName>
</protein>
<keyword id="KW-0479">Metal-binding</keyword>
<keyword id="KW-0500">Molybdenum</keyword>
<keyword id="KW-0560">Oxidoreductase</keyword>
<keyword id="KW-0574">Periplasm</keyword>
<keyword id="KW-0732">Signal</keyword>
<organism>
    <name type="scientific">Vibrio vulnificus (strain YJ016)</name>
    <dbReference type="NCBI Taxonomy" id="196600"/>
    <lineage>
        <taxon>Bacteria</taxon>
        <taxon>Pseudomonadati</taxon>
        <taxon>Pseudomonadota</taxon>
        <taxon>Gammaproteobacteria</taxon>
        <taxon>Vibrionales</taxon>
        <taxon>Vibrionaceae</taxon>
        <taxon>Vibrio</taxon>
    </lineage>
</organism>
<feature type="signal peptide" description="Tat-type signal" evidence="2">
    <location>
        <begin position="1"/>
        <end position="33"/>
    </location>
</feature>
<feature type="chain" id="PRO_0000019162" description="Trimethylamine-N-oxide reductase">
    <location>
        <begin position="34"/>
        <end position="820"/>
    </location>
</feature>
<feature type="binding site" evidence="1">
    <location>
        <position position="179"/>
    </location>
    <ligand>
        <name>Mo-bis(molybdopterin guanine dinucleotide)</name>
        <dbReference type="ChEBI" id="CHEBI:60539"/>
    </ligand>
    <ligandPart>
        <name>Mo</name>
        <dbReference type="ChEBI" id="CHEBI:28685"/>
    </ligandPart>
</feature>
<sequence>MAITRRSFLKGVATTSAASVIGPSLLASASANAVETTGTWKVSGSHWGAFRAHIYAGKVQEIKPIELDQNPTEMLNGIKGIIYSPSRVRYPMVRLDWLKKHKYSADTRGNNRFVRVTWDEALDLFYRELERVQKEYGPWALHAGQTGWNQTGSFNNCTAHMQRAVGMHGNYITKVGDYSTGAGQTILPYVLGSTEVYAQGTSWSEILENADNIILWANDPVKNLQVGWNCETHESYAYLAQLKEKVAKGEINVISVDPVKNKTQRYLENDHLYVNPMTDVPFMLAIAHVLYTENLYDKKFIETYCLGFEEFINYVQGKTKDKVEKTPEWAAPICGVKADKIREFARMLVKGRTQILMGWCIQRQEHGEQPYWAAAVVAAMIGQIGLPGGGISYGHHYSSIGVPSTGFAGPGGFPRNLDAGMKPKWDNNDFNGYSRTIPVARWIDCLLEPGKEINYNGGKVKLPDFKMMVISGCNPWHHHQDRNRMKQAFQKLQTVVTIDFAWTATCRFSDIVLPACTQWERNDIDVYGSYSSRGLIAMHRLVDPLFQSKPDFQIMKELTERFGRSEEYSRGMSEMDWIRSLYNDCKKSNEGKFEMPEFDEFWEKSVLDFGQGQPWVRHADFRQDPEINPLGTPSGFIEITSRKIGRYGYEHCQEHPMWFEKSERSHGGPGSDKHPFWLQSCHPDKRLHSQMCESEEFRATYAVKGREPVYINPLDAKAKGIKEGDLVRVFNDRGQLLAGAVLTDSYPRGVIRIEEGAWYGPLSEKVGAICTYGDPNTLTQDIGSSELAQATSANTCIVDFEKFTGKVPPVTSFGGPIEVA</sequence>
<comment type="function">
    <text evidence="1">Reduces trimethylamine-N-oxide (TMAO) into trimethylamine; an anaerobic reaction coupled to energy-yielding reactions.</text>
</comment>
<comment type="catalytic activity">
    <reaction>
        <text>trimethylamine + 2 Fe(III)-[cytochrome c] + H2O = trimethylamine N-oxide + 2 Fe(II)-[cytochrome c] + 3 H(+)</text>
        <dbReference type="Rhea" id="RHEA:24236"/>
        <dbReference type="Rhea" id="RHEA-COMP:10350"/>
        <dbReference type="Rhea" id="RHEA-COMP:14399"/>
        <dbReference type="ChEBI" id="CHEBI:15377"/>
        <dbReference type="ChEBI" id="CHEBI:15378"/>
        <dbReference type="ChEBI" id="CHEBI:15724"/>
        <dbReference type="ChEBI" id="CHEBI:29033"/>
        <dbReference type="ChEBI" id="CHEBI:29034"/>
        <dbReference type="ChEBI" id="CHEBI:58389"/>
        <dbReference type="EC" id="1.7.2.3"/>
    </reaction>
</comment>
<comment type="cofactor">
    <cofactor evidence="1">
        <name>Mo-bis(molybdopterin guanine dinucleotide)</name>
        <dbReference type="ChEBI" id="CHEBI:60539"/>
    </cofactor>
    <text evidence="1">Binds 1 molybdenum-bis(molybdopterin guanine dinucleotide) (Mo-bis-MGD) cofactor per subunit.</text>
</comment>
<comment type="subcellular location">
    <subcellularLocation>
        <location evidence="1">Periplasm</location>
    </subcellularLocation>
</comment>
<comment type="PTM">
    <text>Predicted to be exported by the Tat system. The position of the signal peptide cleavage has not been experimentally proven.</text>
</comment>
<comment type="similarity">
    <text evidence="3">Belongs to the prokaryotic molybdopterin-containing oxidoreductase family.</text>
</comment>
<evidence type="ECO:0000250" key="1"/>
<evidence type="ECO:0000255" key="2">
    <source>
        <dbReference type="PROSITE-ProRule" id="PRU00648"/>
    </source>
</evidence>
<evidence type="ECO:0000305" key="3"/>
<reference key="1">
    <citation type="journal article" date="2003" name="Genome Res.">
        <title>Comparative genome analysis of Vibrio vulnificus, a marine pathogen.</title>
        <authorList>
            <person name="Chen C.-Y."/>
            <person name="Wu K.-M."/>
            <person name="Chang Y.-C."/>
            <person name="Chang C.-H."/>
            <person name="Tsai H.-C."/>
            <person name="Liao T.-L."/>
            <person name="Liu Y.-M."/>
            <person name="Chen H.-J."/>
            <person name="Shen A.B.-T."/>
            <person name="Li J.-C."/>
            <person name="Su T.-L."/>
            <person name="Shao C.-P."/>
            <person name="Lee C.-T."/>
            <person name="Hor L.-I."/>
            <person name="Tsai S.-F."/>
        </authorList>
    </citation>
    <scope>NUCLEOTIDE SEQUENCE [LARGE SCALE GENOMIC DNA]</scope>
    <source>
        <strain>YJ016</strain>
    </source>
</reference>
<dbReference type="EC" id="1.7.2.3"/>
<dbReference type="EMBL" id="BA000037">
    <property type="protein sequence ID" value="BAC94139.1"/>
    <property type="molecule type" value="Genomic_DNA"/>
</dbReference>
<dbReference type="RefSeq" id="WP_011150040.1">
    <property type="nucleotide sequence ID" value="NC_005139.1"/>
</dbReference>
<dbReference type="SMR" id="Q7MLQ2"/>
<dbReference type="STRING" id="672.VV93_v1c12880"/>
<dbReference type="KEGG" id="vvy:VV1375"/>
<dbReference type="PATRIC" id="fig|196600.6.peg.1364"/>
<dbReference type="eggNOG" id="COG0243">
    <property type="taxonomic scope" value="Bacteria"/>
</dbReference>
<dbReference type="HOGENOM" id="CLU_000422_13_3_6"/>
<dbReference type="Proteomes" id="UP000002675">
    <property type="component" value="Chromosome I"/>
</dbReference>
<dbReference type="GO" id="GO:0030288">
    <property type="term" value="C:outer membrane-bounded periplasmic space"/>
    <property type="evidence" value="ECO:0007669"/>
    <property type="project" value="TreeGrafter"/>
</dbReference>
<dbReference type="GO" id="GO:0009055">
    <property type="term" value="F:electron transfer activity"/>
    <property type="evidence" value="ECO:0007669"/>
    <property type="project" value="TreeGrafter"/>
</dbReference>
<dbReference type="GO" id="GO:0030151">
    <property type="term" value="F:molybdenum ion binding"/>
    <property type="evidence" value="ECO:0007669"/>
    <property type="project" value="InterPro"/>
</dbReference>
<dbReference type="GO" id="GO:0043546">
    <property type="term" value="F:molybdopterin cofactor binding"/>
    <property type="evidence" value="ECO:0007669"/>
    <property type="project" value="InterPro"/>
</dbReference>
<dbReference type="GO" id="GO:0050626">
    <property type="term" value="F:trimethylamine-N-oxide reductase (cytochrome c) activity"/>
    <property type="evidence" value="ECO:0007669"/>
    <property type="project" value="UniProtKB-EC"/>
</dbReference>
<dbReference type="GO" id="GO:0009061">
    <property type="term" value="P:anaerobic respiration"/>
    <property type="evidence" value="ECO:0007669"/>
    <property type="project" value="TreeGrafter"/>
</dbReference>
<dbReference type="CDD" id="cd02793">
    <property type="entry name" value="MopB_CT_DMSOR-BSOR-TMAOR"/>
    <property type="match status" value="1"/>
</dbReference>
<dbReference type="FunFam" id="2.40.40.20:FF:000009">
    <property type="entry name" value="Biotin sulfoxide reductase 2"/>
    <property type="match status" value="1"/>
</dbReference>
<dbReference type="Gene3D" id="2.40.40.20">
    <property type="match status" value="1"/>
</dbReference>
<dbReference type="Gene3D" id="3.40.50.740">
    <property type="match status" value="1"/>
</dbReference>
<dbReference type="Gene3D" id="3.40.228.10">
    <property type="entry name" value="Dimethylsulfoxide Reductase, domain 2"/>
    <property type="match status" value="1"/>
</dbReference>
<dbReference type="Gene3D" id="3.90.55.10">
    <property type="entry name" value="Dimethylsulfoxide Reductase, domain 3"/>
    <property type="match status" value="1"/>
</dbReference>
<dbReference type="InterPro" id="IPR009010">
    <property type="entry name" value="Asp_de-COase-like_dom_sf"/>
</dbReference>
<dbReference type="InterPro" id="IPR041954">
    <property type="entry name" value="CT_DMSOR/BSOR/TMAOR"/>
</dbReference>
<dbReference type="InterPro" id="IPR041460">
    <property type="entry name" value="Molybdopterin_N"/>
</dbReference>
<dbReference type="InterPro" id="IPR006657">
    <property type="entry name" value="MoPterin_dinucl-bd_dom"/>
</dbReference>
<dbReference type="InterPro" id="IPR006656">
    <property type="entry name" value="Mopterin_OxRdtase"/>
</dbReference>
<dbReference type="InterPro" id="IPR006655">
    <property type="entry name" value="Mopterin_OxRdtase_prok_CS"/>
</dbReference>
<dbReference type="InterPro" id="IPR050612">
    <property type="entry name" value="Prok_Mopterin_Oxidored"/>
</dbReference>
<dbReference type="InterPro" id="IPR006311">
    <property type="entry name" value="TAT_signal"/>
</dbReference>
<dbReference type="InterPro" id="IPR019546">
    <property type="entry name" value="TAT_signal_bac_arc"/>
</dbReference>
<dbReference type="InterPro" id="IPR011887">
    <property type="entry name" value="TorA"/>
</dbReference>
<dbReference type="NCBIfam" id="NF011682">
    <property type="entry name" value="PRK15102.1"/>
    <property type="match status" value="1"/>
</dbReference>
<dbReference type="NCBIfam" id="TIGR01409">
    <property type="entry name" value="TAT_signal_seq"/>
    <property type="match status" value="1"/>
</dbReference>
<dbReference type="NCBIfam" id="TIGR02164">
    <property type="entry name" value="torA"/>
    <property type="match status" value="1"/>
</dbReference>
<dbReference type="PANTHER" id="PTHR43742">
    <property type="entry name" value="TRIMETHYLAMINE-N-OXIDE REDUCTASE"/>
    <property type="match status" value="1"/>
</dbReference>
<dbReference type="PANTHER" id="PTHR43742:SF4">
    <property type="entry name" value="TRIMETHYLAMINE-N-OXIDE REDUCTASE 1"/>
    <property type="match status" value="1"/>
</dbReference>
<dbReference type="Pfam" id="PF00384">
    <property type="entry name" value="Molybdopterin"/>
    <property type="match status" value="1"/>
</dbReference>
<dbReference type="Pfam" id="PF18364">
    <property type="entry name" value="Molybdopterin_N"/>
    <property type="match status" value="1"/>
</dbReference>
<dbReference type="Pfam" id="PF01568">
    <property type="entry name" value="Molydop_binding"/>
    <property type="match status" value="1"/>
</dbReference>
<dbReference type="SUPFAM" id="SSF50692">
    <property type="entry name" value="ADC-like"/>
    <property type="match status" value="1"/>
</dbReference>
<dbReference type="SUPFAM" id="SSF53706">
    <property type="entry name" value="Formate dehydrogenase/DMSO reductase, domains 1-3"/>
    <property type="match status" value="1"/>
</dbReference>
<dbReference type="PROSITE" id="PS00490">
    <property type="entry name" value="MOLYBDOPTERIN_PROK_2"/>
    <property type="match status" value="1"/>
</dbReference>
<dbReference type="PROSITE" id="PS00932">
    <property type="entry name" value="MOLYBDOPTERIN_PROK_3"/>
    <property type="match status" value="1"/>
</dbReference>
<dbReference type="PROSITE" id="PS51318">
    <property type="entry name" value="TAT"/>
    <property type="match status" value="1"/>
</dbReference>
<proteinExistence type="inferred from homology"/>
<gene>
    <name type="primary">torA</name>
    <name type="ordered locus">VV1375</name>
</gene>
<accession>Q7MLQ2</accession>
<name>TORA_VIBVY</name>